<comment type="function">
    <text evidence="1">Joins adenosylcobinamide-GDP and alpha-ribazole to generate adenosylcobalamin (Ado-cobalamin). Also synthesizes adenosylcobalamin 5'-phosphate from adenosylcobinamide-GDP and alpha-ribazole 5'-phosphate.</text>
</comment>
<comment type="catalytic activity">
    <reaction evidence="1">
        <text>alpha-ribazole + adenosylcob(III)inamide-GDP = adenosylcob(III)alamin + GMP + H(+)</text>
        <dbReference type="Rhea" id="RHEA:16049"/>
        <dbReference type="ChEBI" id="CHEBI:10329"/>
        <dbReference type="ChEBI" id="CHEBI:15378"/>
        <dbReference type="ChEBI" id="CHEBI:18408"/>
        <dbReference type="ChEBI" id="CHEBI:58115"/>
        <dbReference type="ChEBI" id="CHEBI:60487"/>
        <dbReference type="EC" id="2.7.8.26"/>
    </reaction>
</comment>
<comment type="catalytic activity">
    <reaction evidence="1">
        <text>alpha-ribazole 5'-phosphate + adenosylcob(III)inamide-GDP = adenosylcob(III)alamin 5'-phosphate + GMP + H(+)</text>
        <dbReference type="Rhea" id="RHEA:23560"/>
        <dbReference type="ChEBI" id="CHEBI:15378"/>
        <dbReference type="ChEBI" id="CHEBI:57918"/>
        <dbReference type="ChEBI" id="CHEBI:58115"/>
        <dbReference type="ChEBI" id="CHEBI:60487"/>
        <dbReference type="ChEBI" id="CHEBI:60493"/>
        <dbReference type="EC" id="2.7.8.26"/>
    </reaction>
</comment>
<comment type="cofactor">
    <cofactor evidence="1">
        <name>Mg(2+)</name>
        <dbReference type="ChEBI" id="CHEBI:18420"/>
    </cofactor>
</comment>
<comment type="pathway">
    <text evidence="1">Cofactor biosynthesis; adenosylcobalamin biosynthesis; adenosylcobalamin from cob(II)yrinate a,c-diamide: step 7/7.</text>
</comment>
<comment type="subcellular location">
    <subcellularLocation>
        <location evidence="1">Cell inner membrane</location>
        <topology evidence="1">Multi-pass membrane protein</topology>
    </subcellularLocation>
</comment>
<comment type="similarity">
    <text evidence="1">Belongs to the CobS family.</text>
</comment>
<name>COBS_PSEPG</name>
<keyword id="KW-0997">Cell inner membrane</keyword>
<keyword id="KW-1003">Cell membrane</keyword>
<keyword id="KW-0169">Cobalamin biosynthesis</keyword>
<keyword id="KW-0460">Magnesium</keyword>
<keyword id="KW-0472">Membrane</keyword>
<keyword id="KW-0808">Transferase</keyword>
<keyword id="KW-0812">Transmembrane</keyword>
<keyword id="KW-1133">Transmembrane helix</keyword>
<reference key="1">
    <citation type="submission" date="2008-01" db="EMBL/GenBank/DDBJ databases">
        <title>Complete sequence of Pseudomonas putida GB-1.</title>
        <authorList>
            <consortium name="US DOE Joint Genome Institute"/>
            <person name="Copeland A."/>
            <person name="Lucas S."/>
            <person name="Lapidus A."/>
            <person name="Barry K."/>
            <person name="Glavina del Rio T."/>
            <person name="Dalin E."/>
            <person name="Tice H."/>
            <person name="Pitluck S."/>
            <person name="Bruce D."/>
            <person name="Goodwin L."/>
            <person name="Chertkov O."/>
            <person name="Brettin T."/>
            <person name="Detter J.C."/>
            <person name="Han C."/>
            <person name="Kuske C.R."/>
            <person name="Schmutz J."/>
            <person name="Larimer F."/>
            <person name="Land M."/>
            <person name="Hauser L."/>
            <person name="Kyrpides N."/>
            <person name="Kim E."/>
            <person name="McCarthy J.K."/>
            <person name="Richardson P."/>
        </authorList>
    </citation>
    <scope>NUCLEOTIDE SEQUENCE [LARGE SCALE GENOMIC DNA]</scope>
    <source>
        <strain>GB-1</strain>
    </source>
</reference>
<sequence length="240" mass="25506">MLPFLIALQFLSSLPVSLPGMPAAREVGRSLLYYPLVGLLFGLLLWLASHLLQGTPAPLHAALLLTAWVLLSGALHLDGLADSADAWLGGFGDRERTLQIMKDPRSGPIAVVTLVLVLLLKFCALWVLVEQGVGAQLLLAPLIGRTAMLGLFLCTPYVRPGGLGQALAEHLPRRAAGWVLLCCALFCLLLGGWVVLLAVAVFAWLRHLMYRRLGGATGDTAGALLELLELAVVLGLALGL</sequence>
<feature type="chain" id="PRO_1000083263" description="Adenosylcobinamide-GDP ribazoletransferase">
    <location>
        <begin position="1"/>
        <end position="240"/>
    </location>
</feature>
<feature type="transmembrane region" description="Helical" evidence="1">
    <location>
        <begin position="31"/>
        <end position="51"/>
    </location>
</feature>
<feature type="transmembrane region" description="Helical" evidence="1">
    <location>
        <begin position="57"/>
        <end position="77"/>
    </location>
</feature>
<feature type="transmembrane region" description="Helical" evidence="1">
    <location>
        <begin position="109"/>
        <end position="129"/>
    </location>
</feature>
<feature type="transmembrane region" description="Helical" evidence="1">
    <location>
        <begin position="133"/>
        <end position="153"/>
    </location>
</feature>
<feature type="transmembrane region" description="Helical" evidence="1">
    <location>
        <begin position="185"/>
        <end position="205"/>
    </location>
</feature>
<protein>
    <recommendedName>
        <fullName evidence="1">Adenosylcobinamide-GDP ribazoletransferase</fullName>
        <ecNumber evidence="1">2.7.8.26</ecNumber>
    </recommendedName>
    <alternativeName>
        <fullName evidence="1">Cobalamin synthase</fullName>
    </alternativeName>
    <alternativeName>
        <fullName evidence="1">Cobalamin-5'-phosphate synthase</fullName>
    </alternativeName>
</protein>
<gene>
    <name evidence="1" type="primary">cobS</name>
    <name type="ordered locus">PputGB1_1280</name>
</gene>
<proteinExistence type="inferred from homology"/>
<dbReference type="EC" id="2.7.8.26" evidence="1"/>
<dbReference type="EMBL" id="CP000926">
    <property type="protein sequence ID" value="ABY97187.1"/>
    <property type="molecule type" value="Genomic_DNA"/>
</dbReference>
<dbReference type="RefSeq" id="WP_012270962.1">
    <property type="nucleotide sequence ID" value="NC_010322.1"/>
</dbReference>
<dbReference type="KEGG" id="ppg:PputGB1_1280"/>
<dbReference type="eggNOG" id="COG0368">
    <property type="taxonomic scope" value="Bacteria"/>
</dbReference>
<dbReference type="HOGENOM" id="CLU_057426_3_1_6"/>
<dbReference type="UniPathway" id="UPA00148">
    <property type="reaction ID" value="UER00238"/>
</dbReference>
<dbReference type="Proteomes" id="UP000002157">
    <property type="component" value="Chromosome"/>
</dbReference>
<dbReference type="GO" id="GO:0005886">
    <property type="term" value="C:plasma membrane"/>
    <property type="evidence" value="ECO:0007669"/>
    <property type="project" value="UniProtKB-SubCell"/>
</dbReference>
<dbReference type="GO" id="GO:0051073">
    <property type="term" value="F:adenosylcobinamide-GDP ribazoletransferase activity"/>
    <property type="evidence" value="ECO:0007669"/>
    <property type="project" value="UniProtKB-UniRule"/>
</dbReference>
<dbReference type="GO" id="GO:0008818">
    <property type="term" value="F:cobalamin 5'-phosphate synthase activity"/>
    <property type="evidence" value="ECO:0007669"/>
    <property type="project" value="UniProtKB-UniRule"/>
</dbReference>
<dbReference type="GO" id="GO:0009236">
    <property type="term" value="P:cobalamin biosynthetic process"/>
    <property type="evidence" value="ECO:0007669"/>
    <property type="project" value="UniProtKB-UniRule"/>
</dbReference>
<dbReference type="HAMAP" id="MF_00719">
    <property type="entry name" value="CobS"/>
    <property type="match status" value="1"/>
</dbReference>
<dbReference type="InterPro" id="IPR003805">
    <property type="entry name" value="CobS"/>
</dbReference>
<dbReference type="NCBIfam" id="TIGR00317">
    <property type="entry name" value="cobS"/>
    <property type="match status" value="1"/>
</dbReference>
<dbReference type="NCBIfam" id="NF001278">
    <property type="entry name" value="PRK00235.1-5"/>
    <property type="match status" value="1"/>
</dbReference>
<dbReference type="PANTHER" id="PTHR34148">
    <property type="entry name" value="ADENOSYLCOBINAMIDE-GDP RIBAZOLETRANSFERASE"/>
    <property type="match status" value="1"/>
</dbReference>
<dbReference type="PANTHER" id="PTHR34148:SF1">
    <property type="entry name" value="ADENOSYLCOBINAMIDE-GDP RIBAZOLETRANSFERASE"/>
    <property type="match status" value="1"/>
</dbReference>
<dbReference type="Pfam" id="PF02654">
    <property type="entry name" value="CobS"/>
    <property type="match status" value="1"/>
</dbReference>
<evidence type="ECO:0000255" key="1">
    <source>
        <dbReference type="HAMAP-Rule" id="MF_00719"/>
    </source>
</evidence>
<organism>
    <name type="scientific">Pseudomonas putida (strain GB-1)</name>
    <dbReference type="NCBI Taxonomy" id="76869"/>
    <lineage>
        <taxon>Bacteria</taxon>
        <taxon>Pseudomonadati</taxon>
        <taxon>Pseudomonadota</taxon>
        <taxon>Gammaproteobacteria</taxon>
        <taxon>Pseudomonadales</taxon>
        <taxon>Pseudomonadaceae</taxon>
        <taxon>Pseudomonas</taxon>
    </lineage>
</organism>
<accession>B0KT69</accession>